<protein>
    <recommendedName>
        <fullName evidence="1">Leucine--tRNA ligase</fullName>
        <ecNumber evidence="1">6.1.1.4</ecNumber>
    </recommendedName>
    <alternativeName>
        <fullName evidence="1">Leucyl-tRNA synthetase</fullName>
        <shortName evidence="1">LeuRS</shortName>
    </alternativeName>
</protein>
<keyword id="KW-0030">Aminoacyl-tRNA synthetase</keyword>
<keyword id="KW-0067">ATP-binding</keyword>
<keyword id="KW-0963">Cytoplasm</keyword>
<keyword id="KW-0436">Ligase</keyword>
<keyword id="KW-0547">Nucleotide-binding</keyword>
<keyword id="KW-0648">Protein biosynthesis</keyword>
<keyword id="KW-1185">Reference proteome</keyword>
<evidence type="ECO:0000255" key="1">
    <source>
        <dbReference type="HAMAP-Rule" id="MF_00049"/>
    </source>
</evidence>
<evidence type="ECO:0000305" key="2"/>
<name>SYL_ECOL6</name>
<reference key="1">
    <citation type="journal article" date="2002" name="Proc. Natl. Acad. Sci. U.S.A.">
        <title>Extensive mosaic structure revealed by the complete genome sequence of uropathogenic Escherichia coli.</title>
        <authorList>
            <person name="Welch R.A."/>
            <person name="Burland V."/>
            <person name="Plunkett G. III"/>
            <person name="Redford P."/>
            <person name="Roesch P."/>
            <person name="Rasko D."/>
            <person name="Buckles E.L."/>
            <person name="Liou S.-R."/>
            <person name="Boutin A."/>
            <person name="Hackett J."/>
            <person name="Stroud D."/>
            <person name="Mayhew G.F."/>
            <person name="Rose D.J."/>
            <person name="Zhou S."/>
            <person name="Schwartz D.C."/>
            <person name="Perna N.T."/>
            <person name="Mobley H.L.T."/>
            <person name="Donnenberg M.S."/>
            <person name="Blattner F.R."/>
        </authorList>
    </citation>
    <scope>NUCLEOTIDE SEQUENCE [LARGE SCALE GENOMIC DNA]</scope>
    <source>
        <strain>CFT073 / ATCC 700928 / UPEC</strain>
    </source>
</reference>
<sequence length="860" mass="97235">MQEQYRPEEIESKVQLHWDEKRTFEVTEDESKEKYYCLSMLPYPSGRLHMGHVRNYTIGDVIARYQRMLGKNVLQPIGWDAFGLPAEGAAVKNNTAPAPWTYDNIAYMKNQLKMLGFGYDWSRELATCTPEYYRWEQKFFTELYKKGLVYKKTSAVNWCPNDQTVLANEQVIDGCCWRCDTKVERKEIPQWFIKITAYADELLNDLDKLDHWPDTVKTMQRNWIGRSEGVEITFNVNDYDNTLTVYTTRPDTFMGCTYLAVAAGHPLAQKAAENNPELAAFIDECRNTKVAEAEMATMEKKGVDTGFKAVHPLTGEEIPVWAANFVLMEYGTGAVMAVPGHDQRDYEFASKYGLNIKPVILAADGSEPDLSQQALTEKGVLFNSGEFNGLDHEAAFNAIADKLTAMGVGERKVNYRLRDWGVSRQRYWGAPIPMVTLEDGTVMPTPDDQLPVILPEDVVMDGITSPIKADPEWAKTTVNGMPALRETDTFDTFMESSWYYARYTCPEYKEGMLDSKAANYWLPVDIYIGGIEHAIMHLLYFRFFHKLMRDAGMVNSDEPAKQLLCQGMVLADAFYYVGENGERNWVSPVDAIVERDEKGRIVKAKDAAGHELVYTGMSKMSKSKNNGIDPQVMVERYGADTVRLFMMFASPADMTLEWQESGVEGANRFLKRVWKLVYEHTAKGDVAALNVDALTEDQKALRRDVHKTIAKVTDDIGRRQTFNTAIAAIMELMNKLAKAPTDGEQDRALMQEALLAVVRMLNPFTPHICFTLWQELKGEGDIDNAPWPVADEKAMVEDSTLVVVQVNGKVRAKITVPVDATEEQVRERAGQEHLVAKYLDGVTVRKVIYVPGKLLNLVVG</sequence>
<dbReference type="EC" id="6.1.1.4" evidence="1"/>
<dbReference type="EMBL" id="AE014075">
    <property type="protein sequence ID" value="AAN79206.1"/>
    <property type="status" value="ALT_INIT"/>
    <property type="molecule type" value="Genomic_DNA"/>
</dbReference>
<dbReference type="RefSeq" id="WP_001157896.1">
    <property type="nucleotide sequence ID" value="NZ_CP051263.1"/>
</dbReference>
<dbReference type="SMR" id="Q8FJY9"/>
<dbReference type="STRING" id="199310.c0733"/>
<dbReference type="KEGG" id="ecc:c0733"/>
<dbReference type="eggNOG" id="COG0495">
    <property type="taxonomic scope" value="Bacteria"/>
</dbReference>
<dbReference type="HOGENOM" id="CLU_004427_0_0_6"/>
<dbReference type="Proteomes" id="UP000001410">
    <property type="component" value="Chromosome"/>
</dbReference>
<dbReference type="GO" id="GO:0005829">
    <property type="term" value="C:cytosol"/>
    <property type="evidence" value="ECO:0007669"/>
    <property type="project" value="TreeGrafter"/>
</dbReference>
<dbReference type="GO" id="GO:0002161">
    <property type="term" value="F:aminoacyl-tRNA deacylase activity"/>
    <property type="evidence" value="ECO:0007669"/>
    <property type="project" value="InterPro"/>
</dbReference>
<dbReference type="GO" id="GO:0005524">
    <property type="term" value="F:ATP binding"/>
    <property type="evidence" value="ECO:0007669"/>
    <property type="project" value="UniProtKB-UniRule"/>
</dbReference>
<dbReference type="GO" id="GO:0004823">
    <property type="term" value="F:leucine-tRNA ligase activity"/>
    <property type="evidence" value="ECO:0007669"/>
    <property type="project" value="UniProtKB-UniRule"/>
</dbReference>
<dbReference type="GO" id="GO:0006429">
    <property type="term" value="P:leucyl-tRNA aminoacylation"/>
    <property type="evidence" value="ECO:0007669"/>
    <property type="project" value="UniProtKB-UniRule"/>
</dbReference>
<dbReference type="CDD" id="cd07958">
    <property type="entry name" value="Anticodon_Ia_Leu_BEm"/>
    <property type="match status" value="1"/>
</dbReference>
<dbReference type="CDD" id="cd00812">
    <property type="entry name" value="LeuRS_core"/>
    <property type="match status" value="1"/>
</dbReference>
<dbReference type="FunFam" id="1.10.730.10:FF:000002">
    <property type="entry name" value="Leucine--tRNA ligase"/>
    <property type="match status" value="2"/>
</dbReference>
<dbReference type="FunFam" id="2.20.28.290:FF:000001">
    <property type="entry name" value="Leucine--tRNA ligase"/>
    <property type="match status" value="1"/>
</dbReference>
<dbReference type="FunFam" id="3.10.20.590:FF:000001">
    <property type="entry name" value="Leucine--tRNA ligase"/>
    <property type="match status" value="1"/>
</dbReference>
<dbReference type="FunFam" id="3.40.50.620:FF:000003">
    <property type="entry name" value="Leucine--tRNA ligase"/>
    <property type="match status" value="1"/>
</dbReference>
<dbReference type="FunFam" id="3.40.50.620:FF:000124">
    <property type="entry name" value="Leucine--tRNA ligase"/>
    <property type="match status" value="1"/>
</dbReference>
<dbReference type="FunFam" id="3.90.740.10:FF:000012">
    <property type="entry name" value="Leucine--tRNA ligase"/>
    <property type="match status" value="1"/>
</dbReference>
<dbReference type="Gene3D" id="2.20.28.290">
    <property type="match status" value="1"/>
</dbReference>
<dbReference type="Gene3D" id="3.10.20.590">
    <property type="match status" value="1"/>
</dbReference>
<dbReference type="Gene3D" id="3.40.50.620">
    <property type="entry name" value="HUPs"/>
    <property type="match status" value="2"/>
</dbReference>
<dbReference type="Gene3D" id="1.10.730.10">
    <property type="entry name" value="Isoleucyl-tRNA Synthetase, Domain 1"/>
    <property type="match status" value="1"/>
</dbReference>
<dbReference type="HAMAP" id="MF_00049_B">
    <property type="entry name" value="Leu_tRNA_synth_B"/>
    <property type="match status" value="1"/>
</dbReference>
<dbReference type="InterPro" id="IPR001412">
    <property type="entry name" value="aa-tRNA-synth_I_CS"/>
</dbReference>
<dbReference type="InterPro" id="IPR002300">
    <property type="entry name" value="aa-tRNA-synth_Ia"/>
</dbReference>
<dbReference type="InterPro" id="IPR002302">
    <property type="entry name" value="Leu-tRNA-ligase"/>
</dbReference>
<dbReference type="InterPro" id="IPR025709">
    <property type="entry name" value="Leu_tRNA-synth_edit"/>
</dbReference>
<dbReference type="InterPro" id="IPR013155">
    <property type="entry name" value="M/V/L/I-tRNA-synth_anticd-bd"/>
</dbReference>
<dbReference type="InterPro" id="IPR015413">
    <property type="entry name" value="Methionyl/Leucyl_tRNA_Synth"/>
</dbReference>
<dbReference type="InterPro" id="IPR014729">
    <property type="entry name" value="Rossmann-like_a/b/a_fold"/>
</dbReference>
<dbReference type="InterPro" id="IPR009080">
    <property type="entry name" value="tRNAsynth_Ia_anticodon-bd"/>
</dbReference>
<dbReference type="InterPro" id="IPR009008">
    <property type="entry name" value="Val/Leu/Ile-tRNA-synth_edit"/>
</dbReference>
<dbReference type="NCBIfam" id="TIGR00396">
    <property type="entry name" value="leuS_bact"/>
    <property type="match status" value="1"/>
</dbReference>
<dbReference type="PANTHER" id="PTHR43740:SF2">
    <property type="entry name" value="LEUCINE--TRNA LIGASE, MITOCHONDRIAL"/>
    <property type="match status" value="1"/>
</dbReference>
<dbReference type="PANTHER" id="PTHR43740">
    <property type="entry name" value="LEUCYL-TRNA SYNTHETASE"/>
    <property type="match status" value="1"/>
</dbReference>
<dbReference type="Pfam" id="PF08264">
    <property type="entry name" value="Anticodon_1"/>
    <property type="match status" value="1"/>
</dbReference>
<dbReference type="Pfam" id="PF00133">
    <property type="entry name" value="tRNA-synt_1"/>
    <property type="match status" value="2"/>
</dbReference>
<dbReference type="Pfam" id="PF13603">
    <property type="entry name" value="tRNA-synt_1_2"/>
    <property type="match status" value="1"/>
</dbReference>
<dbReference type="Pfam" id="PF09334">
    <property type="entry name" value="tRNA-synt_1g"/>
    <property type="match status" value="1"/>
</dbReference>
<dbReference type="PRINTS" id="PR00985">
    <property type="entry name" value="TRNASYNTHLEU"/>
</dbReference>
<dbReference type="SUPFAM" id="SSF47323">
    <property type="entry name" value="Anticodon-binding domain of a subclass of class I aminoacyl-tRNA synthetases"/>
    <property type="match status" value="1"/>
</dbReference>
<dbReference type="SUPFAM" id="SSF52374">
    <property type="entry name" value="Nucleotidylyl transferase"/>
    <property type="match status" value="1"/>
</dbReference>
<dbReference type="SUPFAM" id="SSF50677">
    <property type="entry name" value="ValRS/IleRS/LeuRS editing domain"/>
    <property type="match status" value="1"/>
</dbReference>
<dbReference type="PROSITE" id="PS00178">
    <property type="entry name" value="AA_TRNA_LIGASE_I"/>
    <property type="match status" value="1"/>
</dbReference>
<comment type="catalytic activity">
    <reaction evidence="1">
        <text>tRNA(Leu) + L-leucine + ATP = L-leucyl-tRNA(Leu) + AMP + diphosphate</text>
        <dbReference type="Rhea" id="RHEA:11688"/>
        <dbReference type="Rhea" id="RHEA-COMP:9613"/>
        <dbReference type="Rhea" id="RHEA-COMP:9622"/>
        <dbReference type="ChEBI" id="CHEBI:30616"/>
        <dbReference type="ChEBI" id="CHEBI:33019"/>
        <dbReference type="ChEBI" id="CHEBI:57427"/>
        <dbReference type="ChEBI" id="CHEBI:78442"/>
        <dbReference type="ChEBI" id="CHEBI:78494"/>
        <dbReference type="ChEBI" id="CHEBI:456215"/>
        <dbReference type="EC" id="6.1.1.4"/>
    </reaction>
</comment>
<comment type="subcellular location">
    <subcellularLocation>
        <location evidence="1">Cytoplasm</location>
    </subcellularLocation>
</comment>
<comment type="similarity">
    <text evidence="1">Belongs to the class-I aminoacyl-tRNA synthetase family.</text>
</comment>
<comment type="sequence caution" evidence="2">
    <conflict type="erroneous initiation">
        <sequence resource="EMBL-CDS" id="AAN79206"/>
    </conflict>
</comment>
<accession>Q8FJY9</accession>
<proteinExistence type="inferred from homology"/>
<feature type="chain" id="PRO_0000152013" description="Leucine--tRNA ligase">
    <location>
        <begin position="1"/>
        <end position="860"/>
    </location>
</feature>
<feature type="short sequence motif" description="'HIGH' region">
    <location>
        <begin position="42"/>
        <end position="52"/>
    </location>
</feature>
<feature type="short sequence motif" description="'KMSKS' region">
    <location>
        <begin position="619"/>
        <end position="623"/>
    </location>
</feature>
<feature type="binding site" evidence="1">
    <location>
        <position position="622"/>
    </location>
    <ligand>
        <name>ATP</name>
        <dbReference type="ChEBI" id="CHEBI:30616"/>
    </ligand>
</feature>
<gene>
    <name evidence="1" type="primary">leuS</name>
    <name type="ordered locus">c0733</name>
</gene>
<organism>
    <name type="scientific">Escherichia coli O6:H1 (strain CFT073 / ATCC 700928 / UPEC)</name>
    <dbReference type="NCBI Taxonomy" id="199310"/>
    <lineage>
        <taxon>Bacteria</taxon>
        <taxon>Pseudomonadati</taxon>
        <taxon>Pseudomonadota</taxon>
        <taxon>Gammaproteobacteria</taxon>
        <taxon>Enterobacterales</taxon>
        <taxon>Enterobacteriaceae</taxon>
        <taxon>Escherichia</taxon>
    </lineage>
</organism>